<reference key="1">
    <citation type="journal article" date="2008" name="Genome Res.">
        <title>Comparative genome analysis of Salmonella enteritidis PT4 and Salmonella gallinarum 287/91 provides insights into evolutionary and host adaptation pathways.</title>
        <authorList>
            <person name="Thomson N.R."/>
            <person name="Clayton D.J."/>
            <person name="Windhorst D."/>
            <person name="Vernikos G."/>
            <person name="Davidson S."/>
            <person name="Churcher C."/>
            <person name="Quail M.A."/>
            <person name="Stevens M."/>
            <person name="Jones M.A."/>
            <person name="Watson M."/>
            <person name="Barron A."/>
            <person name="Layton A."/>
            <person name="Pickard D."/>
            <person name="Kingsley R.A."/>
            <person name="Bignell A."/>
            <person name="Clark L."/>
            <person name="Harris B."/>
            <person name="Ormond D."/>
            <person name="Abdellah Z."/>
            <person name="Brooks K."/>
            <person name="Cherevach I."/>
            <person name="Chillingworth T."/>
            <person name="Woodward J."/>
            <person name="Norberczak H."/>
            <person name="Lord A."/>
            <person name="Arrowsmith C."/>
            <person name="Jagels K."/>
            <person name="Moule S."/>
            <person name="Mungall K."/>
            <person name="Saunders M."/>
            <person name="Whitehead S."/>
            <person name="Chabalgoity J.A."/>
            <person name="Maskell D."/>
            <person name="Humphreys T."/>
            <person name="Roberts M."/>
            <person name="Barrow P.A."/>
            <person name="Dougan G."/>
            <person name="Parkhill J."/>
        </authorList>
    </citation>
    <scope>NUCLEOTIDE SEQUENCE [LARGE SCALE GENOMIC DNA]</scope>
    <source>
        <strain>P125109</strain>
    </source>
</reference>
<gene>
    <name evidence="1" type="primary">smg</name>
    <name type="ordered locus">SEN3232</name>
</gene>
<protein>
    <recommendedName>
        <fullName evidence="1">Protein Smg</fullName>
    </recommendedName>
</protein>
<comment type="similarity">
    <text evidence="1">Belongs to the Smg family.</text>
</comment>
<evidence type="ECO:0000255" key="1">
    <source>
        <dbReference type="HAMAP-Rule" id="MF_00598"/>
    </source>
</evidence>
<proteinExistence type="inferred from homology"/>
<feature type="chain" id="PRO_1000129899" description="Protein Smg">
    <location>
        <begin position="1"/>
        <end position="157"/>
    </location>
</feature>
<sequence>MFDVLMYLFETYIHNEAELRVDQDRLERDLTDAGFDREDIYNALLWLEKLADYQDGLAEPMQLASDPLSMRIYTVEECERLDASCRGFLLFLEQIQVLNLETREMVIERVLALDTAEFDLEDLKWVILMVLFNIPGCENAYQQMEELLFEVNEGMLH</sequence>
<accession>B5R1E1</accession>
<dbReference type="EMBL" id="AM933172">
    <property type="protein sequence ID" value="CAR34807.1"/>
    <property type="molecule type" value="Genomic_DNA"/>
</dbReference>
<dbReference type="RefSeq" id="WP_000460663.1">
    <property type="nucleotide sequence ID" value="NC_011294.1"/>
</dbReference>
<dbReference type="SMR" id="B5R1E1"/>
<dbReference type="KEGG" id="set:SEN3232"/>
<dbReference type="HOGENOM" id="CLU_133242_0_0_6"/>
<dbReference type="Proteomes" id="UP000000613">
    <property type="component" value="Chromosome"/>
</dbReference>
<dbReference type="HAMAP" id="MF_00598">
    <property type="entry name" value="Smg"/>
    <property type="match status" value="1"/>
</dbReference>
<dbReference type="InterPro" id="IPR007456">
    <property type="entry name" value="Smg"/>
</dbReference>
<dbReference type="NCBIfam" id="NF002897">
    <property type="entry name" value="PRK03430.1"/>
    <property type="match status" value="1"/>
</dbReference>
<dbReference type="PANTHER" id="PTHR38692">
    <property type="entry name" value="PROTEIN SMG"/>
    <property type="match status" value="1"/>
</dbReference>
<dbReference type="PANTHER" id="PTHR38692:SF1">
    <property type="entry name" value="PROTEIN SMG"/>
    <property type="match status" value="1"/>
</dbReference>
<dbReference type="Pfam" id="PF04361">
    <property type="entry name" value="DUF494"/>
    <property type="match status" value="1"/>
</dbReference>
<organism>
    <name type="scientific">Salmonella enteritidis PT4 (strain P125109)</name>
    <dbReference type="NCBI Taxonomy" id="550537"/>
    <lineage>
        <taxon>Bacteria</taxon>
        <taxon>Pseudomonadati</taxon>
        <taxon>Pseudomonadota</taxon>
        <taxon>Gammaproteobacteria</taxon>
        <taxon>Enterobacterales</taxon>
        <taxon>Enterobacteriaceae</taxon>
        <taxon>Salmonella</taxon>
    </lineage>
</organism>
<name>SMG_SALEP</name>